<proteinExistence type="inferred from homology"/>
<protein>
    <recommendedName>
        <fullName>Probable beta-glucosidase F</fullName>
        <ecNumber>3.2.1.21</ecNumber>
    </recommendedName>
    <alternativeName>
        <fullName>Beta-D-glucoside glucohydrolase F</fullName>
    </alternativeName>
    <alternativeName>
        <fullName>Cellobiase F</fullName>
    </alternativeName>
    <alternativeName>
        <fullName>Gentiobiase F</fullName>
    </alternativeName>
</protein>
<reference key="1">
    <citation type="journal article" date="2008" name="PLoS Genet.">
        <title>Genomic islands in the pathogenic filamentous fungus Aspergillus fumigatus.</title>
        <authorList>
            <person name="Fedorova N.D."/>
            <person name="Khaldi N."/>
            <person name="Joardar V.S."/>
            <person name="Maiti R."/>
            <person name="Amedeo P."/>
            <person name="Anderson M.J."/>
            <person name="Crabtree J."/>
            <person name="Silva J.C."/>
            <person name="Badger J.H."/>
            <person name="Albarraq A."/>
            <person name="Angiuoli S."/>
            <person name="Bussey H."/>
            <person name="Bowyer P."/>
            <person name="Cotty P.J."/>
            <person name="Dyer P.S."/>
            <person name="Egan A."/>
            <person name="Galens K."/>
            <person name="Fraser-Liggett C.M."/>
            <person name="Haas B.J."/>
            <person name="Inman J.M."/>
            <person name="Kent R."/>
            <person name="Lemieux S."/>
            <person name="Malavazi I."/>
            <person name="Orvis J."/>
            <person name="Roemer T."/>
            <person name="Ronning C.M."/>
            <person name="Sundaram J.P."/>
            <person name="Sutton G."/>
            <person name="Turner G."/>
            <person name="Venter J.C."/>
            <person name="White O.R."/>
            <person name="Whitty B.R."/>
            <person name="Youngman P."/>
            <person name="Wolfe K.H."/>
            <person name="Goldman G.H."/>
            <person name="Wortman J.R."/>
            <person name="Jiang B."/>
            <person name="Denning D.W."/>
            <person name="Nierman W.C."/>
        </authorList>
    </citation>
    <scope>NUCLEOTIDE SEQUENCE [LARGE SCALE GENOMIC DNA]</scope>
    <source>
        <strain>CBS 144.89 / FGSC A1163 / CEA10</strain>
    </source>
</reference>
<accession>B0Y7Q8</accession>
<organism>
    <name type="scientific">Aspergillus fumigatus (strain CBS 144.89 / FGSC A1163 / CEA10)</name>
    <name type="common">Neosartorya fumigata</name>
    <dbReference type="NCBI Taxonomy" id="451804"/>
    <lineage>
        <taxon>Eukaryota</taxon>
        <taxon>Fungi</taxon>
        <taxon>Dikarya</taxon>
        <taxon>Ascomycota</taxon>
        <taxon>Pezizomycotina</taxon>
        <taxon>Eurotiomycetes</taxon>
        <taxon>Eurotiomycetidae</taxon>
        <taxon>Eurotiales</taxon>
        <taxon>Aspergillaceae</taxon>
        <taxon>Aspergillus</taxon>
        <taxon>Aspergillus subgen. Fumigati</taxon>
    </lineage>
</organism>
<feature type="signal peptide" evidence="2">
    <location>
        <begin position="1"/>
        <end position="19"/>
    </location>
</feature>
<feature type="chain" id="PRO_0000394109" description="Probable beta-glucosidase F">
    <location>
        <begin position="20"/>
        <end position="869"/>
    </location>
</feature>
<feature type="region of interest" description="Disordered" evidence="3">
    <location>
        <begin position="677"/>
        <end position="697"/>
    </location>
</feature>
<feature type="compositionally biased region" description="Pro residues" evidence="3">
    <location>
        <begin position="681"/>
        <end position="691"/>
    </location>
</feature>
<feature type="active site" evidence="1">
    <location>
        <position position="289"/>
    </location>
</feature>
<feature type="glycosylation site" description="N-linked (GlcNAc...) asparagine" evidence="2">
    <location>
        <position position="77"/>
    </location>
</feature>
<feature type="glycosylation site" description="N-linked (GlcNAc...) asparagine" evidence="2">
    <location>
        <position position="261"/>
    </location>
</feature>
<feature type="glycosylation site" description="N-linked (GlcNAc...) asparagine" evidence="2">
    <location>
        <position position="332"/>
    </location>
</feature>
<feature type="glycosylation site" description="N-linked (GlcNAc...) asparagine" evidence="2">
    <location>
        <position position="364"/>
    </location>
</feature>
<feature type="glycosylation site" description="N-linked (GlcNAc...) asparagine" evidence="2">
    <location>
        <position position="399"/>
    </location>
</feature>
<feature type="glycosylation site" description="N-linked (GlcNAc...) asparagine" evidence="2">
    <location>
        <position position="478"/>
    </location>
</feature>
<feature type="glycosylation site" description="N-linked (GlcNAc...) asparagine" evidence="2">
    <location>
        <position position="728"/>
    </location>
</feature>
<comment type="function">
    <text evidence="1">Beta-glucosidases are one of a number of cellulolytic enzymes involved in the degradation of cellulosic biomass. Catalyzes the last step releasing glucose from the inhibitory cellobiose (By similarity).</text>
</comment>
<comment type="catalytic activity">
    <reaction>
        <text>Hydrolysis of terminal, non-reducing beta-D-glucosyl residues with release of beta-D-glucose.</text>
        <dbReference type="EC" id="3.2.1.21"/>
    </reaction>
</comment>
<comment type="pathway">
    <text>Glycan metabolism; cellulose degradation.</text>
</comment>
<comment type="subcellular location">
    <subcellularLocation>
        <location evidence="1">Secreted</location>
    </subcellularLocation>
</comment>
<comment type="similarity">
    <text evidence="4">Belongs to the glycosyl hydrolase 3 family.</text>
</comment>
<comment type="sequence caution" evidence="4">
    <conflict type="erroneous gene model prediction">
        <sequence resource="EMBL-CDS" id="EDP49439"/>
    </conflict>
</comment>
<sequence length="869" mass="93060">MRVLSAIALVASLASSALSAPASESRVSTQLRSRDAEGYSSPPYYPAPNGGWLSSWADAYEKAQRVVRDMTLAEKVNLTTGTGIFMGPCVGQTGSALRFGIPNLCLQDSPLGVRNSDHNTAFPAGITVGATFDKDLMYARGVELGKEFRGKGINVLLGPSVGPIGRKPRGGRNWEGFGADPSLQAIGGAQTIKGIQSQGVIATIKHYIGNEQEMYRMSNVGQRAYSSNIDDRTLHEVYLWPFAEGIRAGVGAVMTAYNEVNSSACSQNSKLLNEILKDELGFQGFVMTDWLGQYGGVSSALAGLDMAMPGDGAIPLLGTAYWGSELSRSILNGSVPVSRLNDMVTRIVAAWYKMGQDGDFPLPNFSSNTQDATGPLYPGALFSPSGVVNQYVNVQADHNITARAIARDAITLLKNDDNILPLKKDDALKVFGTDAGPNPDGLNSCADMGCNKGVLTMGWGSGTSRLPYLVTPQEAIANISSNAAFFITDKFPSNVAVSSGDVAVVFISADSGENYITVEGNPGDRTSAGLNAWHNGDKLVKDAAAKFSKVVVVVHTVGPILMEEWIDLPSVKAVLVAHLPGQEAGWSLTDVLFGDYSPSGHLPYTIPRAESDYPSSVGLLSQPIVQIQDTYTEGLYIDYRHFLKANITPRYPFGHGLSYTTFSFSQPTLSVRTALDSTYPPTRPPKGPTPTYPTAIPDPSEVAWPKNFDRIWRYLYPYLDDPASAAKNSSKTYPYPAGYTTVPKPAPRAGGAEGGNPALFDVAFAVSVTVTNTGSRPGRAVAQLYVELPDSLGETPSRQLRQFAKTKTLAPGTSETLTMEITRKDISVWDVVVQDWKAPVRGEGVKIWLGESVLDMRAVCEVGGACRVI</sequence>
<gene>
    <name type="primary">bglF</name>
    <name type="ORF">AFUB_074660</name>
</gene>
<evidence type="ECO:0000250" key="1"/>
<evidence type="ECO:0000255" key="2"/>
<evidence type="ECO:0000256" key="3">
    <source>
        <dbReference type="SAM" id="MobiDB-lite"/>
    </source>
</evidence>
<evidence type="ECO:0000305" key="4"/>
<name>BGLF_ASPFC</name>
<keyword id="KW-0119">Carbohydrate metabolism</keyword>
<keyword id="KW-0136">Cellulose degradation</keyword>
<keyword id="KW-0325">Glycoprotein</keyword>
<keyword id="KW-0326">Glycosidase</keyword>
<keyword id="KW-0378">Hydrolase</keyword>
<keyword id="KW-0624">Polysaccharide degradation</keyword>
<keyword id="KW-0964">Secreted</keyword>
<keyword id="KW-0732">Signal</keyword>
<dbReference type="EC" id="3.2.1.21"/>
<dbReference type="EMBL" id="DS499599">
    <property type="protein sequence ID" value="EDP49439.1"/>
    <property type="status" value="ALT_SEQ"/>
    <property type="molecule type" value="Genomic_DNA"/>
</dbReference>
<dbReference type="SMR" id="B0Y7Q8"/>
<dbReference type="GlyCosmos" id="B0Y7Q8">
    <property type="glycosylation" value="7 sites, No reported glycans"/>
</dbReference>
<dbReference type="VEuPathDB" id="FungiDB:AFUB_074660"/>
<dbReference type="OrthoDB" id="59076at5052"/>
<dbReference type="PhylomeDB" id="B0Y7Q8"/>
<dbReference type="UniPathway" id="UPA00696"/>
<dbReference type="Proteomes" id="UP000001699">
    <property type="component" value="Unassembled WGS sequence"/>
</dbReference>
<dbReference type="GO" id="GO:0005576">
    <property type="term" value="C:extracellular region"/>
    <property type="evidence" value="ECO:0007669"/>
    <property type="project" value="UniProtKB-SubCell"/>
</dbReference>
<dbReference type="GO" id="GO:0008422">
    <property type="term" value="F:beta-glucosidase activity"/>
    <property type="evidence" value="ECO:0007669"/>
    <property type="project" value="UniProtKB-EC"/>
</dbReference>
<dbReference type="GO" id="GO:0030245">
    <property type="term" value="P:cellulose catabolic process"/>
    <property type="evidence" value="ECO:0007669"/>
    <property type="project" value="UniProtKB-UniPathway"/>
</dbReference>
<dbReference type="FunFam" id="2.60.40.10:FF:001619">
    <property type="entry name" value="Beta-glucosidase"/>
    <property type="match status" value="1"/>
</dbReference>
<dbReference type="FunFam" id="3.20.20.300:FF:000002">
    <property type="entry name" value="Probable beta-glucosidase"/>
    <property type="match status" value="1"/>
</dbReference>
<dbReference type="FunFam" id="3.40.50.1700:FF:000003">
    <property type="entry name" value="Probable beta-glucosidase"/>
    <property type="match status" value="1"/>
</dbReference>
<dbReference type="Gene3D" id="3.40.50.1700">
    <property type="entry name" value="Glycoside hydrolase family 3 C-terminal domain"/>
    <property type="match status" value="1"/>
</dbReference>
<dbReference type="Gene3D" id="3.20.20.300">
    <property type="entry name" value="Glycoside hydrolase, family 3, N-terminal domain"/>
    <property type="match status" value="1"/>
</dbReference>
<dbReference type="Gene3D" id="2.60.40.10">
    <property type="entry name" value="Immunoglobulins"/>
    <property type="match status" value="1"/>
</dbReference>
<dbReference type="InterPro" id="IPR050288">
    <property type="entry name" value="Cellulose_deg_GH3"/>
</dbReference>
<dbReference type="InterPro" id="IPR026891">
    <property type="entry name" value="Fn3-like"/>
</dbReference>
<dbReference type="InterPro" id="IPR019800">
    <property type="entry name" value="Glyco_hydro_3_AS"/>
</dbReference>
<dbReference type="InterPro" id="IPR002772">
    <property type="entry name" value="Glyco_hydro_3_C"/>
</dbReference>
<dbReference type="InterPro" id="IPR036881">
    <property type="entry name" value="Glyco_hydro_3_C_sf"/>
</dbReference>
<dbReference type="InterPro" id="IPR001764">
    <property type="entry name" value="Glyco_hydro_3_N"/>
</dbReference>
<dbReference type="InterPro" id="IPR036962">
    <property type="entry name" value="Glyco_hydro_3_N_sf"/>
</dbReference>
<dbReference type="InterPro" id="IPR017853">
    <property type="entry name" value="Glycoside_hydrolase_SF"/>
</dbReference>
<dbReference type="InterPro" id="IPR013783">
    <property type="entry name" value="Ig-like_fold"/>
</dbReference>
<dbReference type="PANTHER" id="PTHR42715">
    <property type="entry name" value="BETA-GLUCOSIDASE"/>
    <property type="match status" value="1"/>
</dbReference>
<dbReference type="PANTHER" id="PTHR42715:SF2">
    <property type="entry name" value="BETA-GLUCOSIDASE F-RELATED"/>
    <property type="match status" value="1"/>
</dbReference>
<dbReference type="Pfam" id="PF14310">
    <property type="entry name" value="Fn3-like"/>
    <property type="match status" value="1"/>
</dbReference>
<dbReference type="Pfam" id="PF00933">
    <property type="entry name" value="Glyco_hydro_3"/>
    <property type="match status" value="1"/>
</dbReference>
<dbReference type="Pfam" id="PF01915">
    <property type="entry name" value="Glyco_hydro_3_C"/>
    <property type="match status" value="1"/>
</dbReference>
<dbReference type="PRINTS" id="PR00133">
    <property type="entry name" value="GLHYDRLASE3"/>
</dbReference>
<dbReference type="SMART" id="SM01217">
    <property type="entry name" value="Fn3_like"/>
    <property type="match status" value="1"/>
</dbReference>
<dbReference type="SUPFAM" id="SSF51445">
    <property type="entry name" value="(Trans)glycosidases"/>
    <property type="match status" value="1"/>
</dbReference>
<dbReference type="SUPFAM" id="SSF52279">
    <property type="entry name" value="Beta-D-glucan exohydrolase, C-terminal domain"/>
    <property type="match status" value="1"/>
</dbReference>
<dbReference type="PROSITE" id="PS00775">
    <property type="entry name" value="GLYCOSYL_HYDROL_F3"/>
    <property type="match status" value="1"/>
</dbReference>